<comment type="function">
    <text evidence="1">Functions as a component of the Arp2/3 complex which is involved in regulation of actin polymerization and together with an activating nucleation-promoting factor (NPF) mediates the formation of branched actin networks.</text>
</comment>
<comment type="subunit">
    <text evidence="3">Component of the Arp2/3 complex composed of ARP2, ARP3, ARC40/p41-ARC, ARC35/p34-ARC, ARC18/p21-ARC, ARC19/p20-ARC and ARC16/p16-ARC.</text>
</comment>
<comment type="interaction">
    <interactant intactId="EBI-2764">
        <id>Q05933</id>
    </interactant>
    <interactant intactId="EBI-2757">
        <id>P33204</id>
        <label>ARC19</label>
    </interactant>
    <organismsDiffer>false</organismsDiffer>
    <experiments>4</experiments>
</comment>
<comment type="interaction">
    <interactant intactId="EBI-2764">
        <id>Q05933</id>
    </interactant>
    <interactant intactId="EBI-2770">
        <id>P53731</id>
        <label>ARC35</label>
    </interactant>
    <organismsDiffer>false</organismsDiffer>
    <experiments>5</experiments>
</comment>
<comment type="interaction">
    <interactant intactId="EBI-2764">
        <id>Q05933</id>
    </interactant>
    <interactant intactId="EBI-2777">
        <id>P38328</id>
        <label>ARC40</label>
    </interactant>
    <organismsDiffer>false</organismsDiffer>
    <experiments>5</experiments>
</comment>
<comment type="interaction">
    <interactant intactId="EBI-2764">
        <id>Q05933</id>
    </interactant>
    <interactant intactId="EBI-2927">
        <id>P32381</id>
        <label>ARP2</label>
    </interactant>
    <organismsDiffer>false</organismsDiffer>
    <experiments>8</experiments>
</comment>
<comment type="interaction">
    <interactant intactId="EBI-2764">
        <id>Q05933</id>
    </interactant>
    <interactant intactId="EBI-10022">
        <id>Q12446</id>
        <label>LAS17</label>
    </interactant>
    <organismsDiffer>false</organismsDiffer>
    <experiments>3</experiments>
</comment>
<comment type="interaction">
    <interactant intactId="EBI-2764">
        <id>Q05933</id>
    </interactant>
    <interactant intactId="EBI-11687">
        <id>Q04439</id>
        <label>MYO5</label>
    </interactant>
    <organismsDiffer>false</organismsDiffer>
    <experiments>3</experiments>
</comment>
<comment type="interaction">
    <interactant intactId="EBI-2764">
        <id>Q05933</id>
    </interactant>
    <interactant intactId="EBI-20502">
        <id>P37370</id>
        <label>VRP1</label>
    </interactant>
    <organismsDiffer>false</organismsDiffer>
    <experiments>3</experiments>
</comment>
<comment type="subcellular location">
    <subcellularLocation>
        <location evidence="1">Cytoplasm</location>
        <location evidence="1">Cytoskeleton</location>
    </subcellularLocation>
</comment>
<comment type="miscellaneous">
    <text evidence="2">Present with 1920 molecules/cell in log phase SD medium.</text>
</comment>
<comment type="similarity">
    <text evidence="4">Belongs to the ARPC3 family.</text>
</comment>
<sequence>MPAYHSTFPVDPNTDRMVGNFALLPLNTKFRGPAYPSNSDYDIIDECLDLFRANSFFKNFEIKSPADRVLIYGILFINDCLAHLKITTSFNEAVKVLTNVALDNFTLPGTPGFPLNNVYQVPVQDHNSMDLLKTYIQQFRQELAMRLLERVYSSTDSKEYPSKFWLAFTRRRFMNKSL</sequence>
<proteinExistence type="evidence at protein level"/>
<name>ARPC3_YEAST</name>
<evidence type="ECO:0000250" key="1"/>
<evidence type="ECO:0000269" key="2">
    <source>
    </source>
</evidence>
<evidence type="ECO:0000269" key="3">
    <source>
    </source>
</evidence>
<evidence type="ECO:0000305" key="4"/>
<evidence type="ECO:0007744" key="5">
    <source>
    </source>
</evidence>
<dbReference type="EMBL" id="U19103">
    <property type="protein sequence ID" value="AAB67576.1"/>
    <property type="molecule type" value="Genomic_DNA"/>
</dbReference>
<dbReference type="EMBL" id="AY558319">
    <property type="protein sequence ID" value="AAS56645.1"/>
    <property type="molecule type" value="Genomic_DNA"/>
</dbReference>
<dbReference type="EMBL" id="BK006945">
    <property type="protein sequence ID" value="DAA09673.1"/>
    <property type="molecule type" value="Genomic_DNA"/>
</dbReference>
<dbReference type="PIR" id="S51388">
    <property type="entry name" value="S51388"/>
</dbReference>
<dbReference type="RefSeq" id="NP_013474.3">
    <property type="nucleotide sequence ID" value="NM_001182259.3"/>
</dbReference>
<dbReference type="SMR" id="Q05933"/>
<dbReference type="BioGRID" id="31630">
    <property type="interactions" value="393"/>
</dbReference>
<dbReference type="ComplexPortal" id="CPX-607">
    <property type="entry name" value="Actin-related protein 2/3 complex"/>
</dbReference>
<dbReference type="DIP" id="DIP-2218N"/>
<dbReference type="FunCoup" id="Q05933">
    <property type="interactions" value="1173"/>
</dbReference>
<dbReference type="IntAct" id="Q05933">
    <property type="interactions" value="22"/>
</dbReference>
<dbReference type="MINT" id="Q05933"/>
<dbReference type="STRING" id="4932.YLR370C"/>
<dbReference type="iPTMnet" id="Q05933"/>
<dbReference type="PaxDb" id="4932-YLR370C"/>
<dbReference type="PeptideAtlas" id="Q05933"/>
<dbReference type="TopDownProteomics" id="Q05933"/>
<dbReference type="EnsemblFungi" id="YLR370C_mRNA">
    <property type="protein sequence ID" value="YLR370C"/>
    <property type="gene ID" value="YLR370C"/>
</dbReference>
<dbReference type="GeneID" id="851085"/>
<dbReference type="KEGG" id="sce:YLR370C"/>
<dbReference type="AGR" id="SGD:S000004362"/>
<dbReference type="SGD" id="S000004362">
    <property type="gene designation" value="ARC18"/>
</dbReference>
<dbReference type="VEuPathDB" id="FungiDB:YLR370C"/>
<dbReference type="eggNOG" id="KOG3155">
    <property type="taxonomic scope" value="Eukaryota"/>
</dbReference>
<dbReference type="GeneTree" id="ENSGT00390000018018"/>
<dbReference type="HOGENOM" id="CLU_094365_1_0_1"/>
<dbReference type="InParanoid" id="Q05933"/>
<dbReference type="OMA" id="TPSKWWL"/>
<dbReference type="OrthoDB" id="200404at2759"/>
<dbReference type="BioCyc" id="YEAST:G3O-32439-MONOMER"/>
<dbReference type="Reactome" id="R-SCE-2029482">
    <property type="pathway name" value="Regulation of actin dynamics for phagocytic cup formation"/>
</dbReference>
<dbReference type="Reactome" id="R-SCE-5663213">
    <property type="pathway name" value="RHO GTPases Activate WASPs and WAVEs"/>
</dbReference>
<dbReference type="BioGRID-ORCS" id="851085">
    <property type="hits" value="4 hits in 10 CRISPR screens"/>
</dbReference>
<dbReference type="PRO" id="PR:Q05933"/>
<dbReference type="Proteomes" id="UP000002311">
    <property type="component" value="Chromosome XII"/>
</dbReference>
<dbReference type="RNAct" id="Q05933">
    <property type="molecule type" value="protein"/>
</dbReference>
<dbReference type="GO" id="GO:0015629">
    <property type="term" value="C:actin cytoskeleton"/>
    <property type="evidence" value="ECO:0000303"/>
    <property type="project" value="ComplexPortal"/>
</dbReference>
<dbReference type="GO" id="GO:0005885">
    <property type="term" value="C:Arp2/3 protein complex"/>
    <property type="evidence" value="ECO:0000314"/>
    <property type="project" value="SGD"/>
</dbReference>
<dbReference type="GO" id="GO:0005739">
    <property type="term" value="C:mitochondrion"/>
    <property type="evidence" value="ECO:0000314"/>
    <property type="project" value="SGD"/>
</dbReference>
<dbReference type="GO" id="GO:0003779">
    <property type="term" value="F:actin binding"/>
    <property type="evidence" value="ECO:0007669"/>
    <property type="project" value="UniProtKB-KW"/>
</dbReference>
<dbReference type="GO" id="GO:0044396">
    <property type="term" value="P:actin cortical patch organization"/>
    <property type="evidence" value="ECO:0000315"/>
    <property type="project" value="SGD"/>
</dbReference>
<dbReference type="GO" id="GO:0045010">
    <property type="term" value="P:actin nucleation"/>
    <property type="evidence" value="ECO:0000303"/>
    <property type="project" value="ComplexPortal"/>
</dbReference>
<dbReference type="GO" id="GO:0034314">
    <property type="term" value="P:Arp2/3 complex-mediated actin nucleation"/>
    <property type="evidence" value="ECO:0000318"/>
    <property type="project" value="GO_Central"/>
</dbReference>
<dbReference type="GO" id="GO:0051654">
    <property type="term" value="P:establishment of mitochondrion localization"/>
    <property type="evidence" value="ECO:0000315"/>
    <property type="project" value="SGD"/>
</dbReference>
<dbReference type="GO" id="GO:0030833">
    <property type="term" value="P:regulation of actin filament polymerization"/>
    <property type="evidence" value="ECO:0007669"/>
    <property type="project" value="InterPro"/>
</dbReference>
<dbReference type="FunFam" id="1.10.1760.10:FF:000002">
    <property type="entry name" value="Actin-related protein 2/3 complex subunit 3"/>
    <property type="match status" value="1"/>
</dbReference>
<dbReference type="Gene3D" id="1.10.1760.10">
    <property type="entry name" value="Actin-related protein 2/3 complex subunit 3"/>
    <property type="match status" value="1"/>
</dbReference>
<dbReference type="InterPro" id="IPR007204">
    <property type="entry name" value="ARPC3"/>
</dbReference>
<dbReference type="InterPro" id="IPR036753">
    <property type="entry name" value="ARPC3_sf"/>
</dbReference>
<dbReference type="PANTHER" id="PTHR12391">
    <property type="entry name" value="ARP2/3 COMPLEX 21 KD SUBUNIT"/>
    <property type="match status" value="1"/>
</dbReference>
<dbReference type="Pfam" id="PF04062">
    <property type="entry name" value="P21-Arc"/>
    <property type="match status" value="1"/>
</dbReference>
<dbReference type="PIRSF" id="PIRSF016315">
    <property type="entry name" value="ARP2/3_P21-Arc"/>
    <property type="match status" value="1"/>
</dbReference>
<dbReference type="SUPFAM" id="SSF69060">
    <property type="entry name" value="Arp2/3 complex 21 kDa subunit ARPC3"/>
    <property type="match status" value="1"/>
</dbReference>
<organism>
    <name type="scientific">Saccharomyces cerevisiae (strain ATCC 204508 / S288c)</name>
    <name type="common">Baker's yeast</name>
    <dbReference type="NCBI Taxonomy" id="559292"/>
    <lineage>
        <taxon>Eukaryota</taxon>
        <taxon>Fungi</taxon>
        <taxon>Dikarya</taxon>
        <taxon>Ascomycota</taxon>
        <taxon>Saccharomycotina</taxon>
        <taxon>Saccharomycetes</taxon>
        <taxon>Saccharomycetales</taxon>
        <taxon>Saccharomycetaceae</taxon>
        <taxon>Saccharomyces</taxon>
    </lineage>
</organism>
<keyword id="KW-0009">Actin-binding</keyword>
<keyword id="KW-0963">Cytoplasm</keyword>
<keyword id="KW-0206">Cytoskeleton</keyword>
<keyword id="KW-1017">Isopeptide bond</keyword>
<keyword id="KW-1185">Reference proteome</keyword>
<keyword id="KW-0832">Ubl conjugation</keyword>
<reference key="1">
    <citation type="journal article" date="1997" name="Nature">
        <title>The nucleotide sequence of Saccharomyces cerevisiae chromosome XII.</title>
        <authorList>
            <person name="Johnston M."/>
            <person name="Hillier L.W."/>
            <person name="Riles L."/>
            <person name="Albermann K."/>
            <person name="Andre B."/>
            <person name="Ansorge W."/>
            <person name="Benes V."/>
            <person name="Brueckner M."/>
            <person name="Delius H."/>
            <person name="Dubois E."/>
            <person name="Duesterhoeft A."/>
            <person name="Entian K.-D."/>
            <person name="Floeth M."/>
            <person name="Goffeau A."/>
            <person name="Hebling U."/>
            <person name="Heumann K."/>
            <person name="Heuss-Neitzel D."/>
            <person name="Hilbert H."/>
            <person name="Hilger F."/>
            <person name="Kleine K."/>
            <person name="Koetter P."/>
            <person name="Louis E.J."/>
            <person name="Messenguy F."/>
            <person name="Mewes H.-W."/>
            <person name="Miosga T."/>
            <person name="Moestl D."/>
            <person name="Mueller-Auer S."/>
            <person name="Nentwich U."/>
            <person name="Obermaier B."/>
            <person name="Piravandi E."/>
            <person name="Pohl T.M."/>
            <person name="Portetelle D."/>
            <person name="Purnelle B."/>
            <person name="Rechmann S."/>
            <person name="Rieger M."/>
            <person name="Rinke M."/>
            <person name="Rose M."/>
            <person name="Scharfe M."/>
            <person name="Scherens B."/>
            <person name="Scholler P."/>
            <person name="Schwager C."/>
            <person name="Schwarz S."/>
            <person name="Underwood A.P."/>
            <person name="Urrestarazu L.A."/>
            <person name="Vandenbol M."/>
            <person name="Verhasselt P."/>
            <person name="Vierendeels F."/>
            <person name="Voet M."/>
            <person name="Volckaert G."/>
            <person name="Voss H."/>
            <person name="Wambutt R."/>
            <person name="Wedler E."/>
            <person name="Wedler H."/>
            <person name="Zimmermann F.K."/>
            <person name="Zollner A."/>
            <person name="Hani J."/>
            <person name="Hoheisel J.D."/>
        </authorList>
    </citation>
    <scope>NUCLEOTIDE SEQUENCE [LARGE SCALE GENOMIC DNA]</scope>
    <source>
        <strain>ATCC 204508 / S288c</strain>
    </source>
</reference>
<reference key="2">
    <citation type="journal article" date="2014" name="G3 (Bethesda)">
        <title>The reference genome sequence of Saccharomyces cerevisiae: Then and now.</title>
        <authorList>
            <person name="Engel S.R."/>
            <person name="Dietrich F.S."/>
            <person name="Fisk D.G."/>
            <person name="Binkley G."/>
            <person name="Balakrishnan R."/>
            <person name="Costanzo M.C."/>
            <person name="Dwight S.S."/>
            <person name="Hitz B.C."/>
            <person name="Karra K."/>
            <person name="Nash R.S."/>
            <person name="Weng S."/>
            <person name="Wong E.D."/>
            <person name="Lloyd P."/>
            <person name="Skrzypek M.S."/>
            <person name="Miyasato S.R."/>
            <person name="Simison M."/>
            <person name="Cherry J.M."/>
        </authorList>
    </citation>
    <scope>GENOME REANNOTATION</scope>
    <source>
        <strain>ATCC 204508 / S288c</strain>
    </source>
</reference>
<reference key="3">
    <citation type="journal article" date="2007" name="Genome Res.">
        <title>Approaching a complete repository of sequence-verified protein-encoding clones for Saccharomyces cerevisiae.</title>
        <authorList>
            <person name="Hu Y."/>
            <person name="Rolfs A."/>
            <person name="Bhullar B."/>
            <person name="Murthy T.V.S."/>
            <person name="Zhu C."/>
            <person name="Berger M.F."/>
            <person name="Camargo A.A."/>
            <person name="Kelley F."/>
            <person name="McCarron S."/>
            <person name="Jepson D."/>
            <person name="Richardson A."/>
            <person name="Raphael J."/>
            <person name="Moreira D."/>
            <person name="Taycher E."/>
            <person name="Zuo D."/>
            <person name="Mohr S."/>
            <person name="Kane M.F."/>
            <person name="Williamson J."/>
            <person name="Simpson A.J.G."/>
            <person name="Bulyk M.L."/>
            <person name="Harlow E."/>
            <person name="Marsischky G."/>
            <person name="Kolodner R.D."/>
            <person name="LaBaer J."/>
        </authorList>
    </citation>
    <scope>NUCLEOTIDE SEQUENCE [GENOMIC DNA]</scope>
    <source>
        <strain>ATCC 204508 / S288c</strain>
    </source>
</reference>
<reference key="4">
    <citation type="journal article" date="1997" name="Curr. Biol.">
        <title>The complex containing actin-related proteins Arp2 and Arp3 is required for the motility and integrity of yeast actin patches.</title>
        <authorList>
            <person name="Winter D."/>
            <person name="Podtelejnikov A.V."/>
            <person name="Mann M."/>
            <person name="Li R."/>
        </authorList>
    </citation>
    <scope>IDENTIFICATION IN THE ARP2/3 COMPLEX</scope>
</reference>
<reference key="5">
    <citation type="journal article" date="1997" name="Curr. Biol.">
        <authorList>
            <person name="Winter D."/>
            <person name="Podtelejnikov A.V."/>
            <person name="Mann M."/>
            <person name="Li R."/>
        </authorList>
    </citation>
    <scope>ERRATUM OF PUBMED:9210376</scope>
</reference>
<reference key="6">
    <citation type="journal article" date="2003" name="Nature">
        <title>Global analysis of protein expression in yeast.</title>
        <authorList>
            <person name="Ghaemmaghami S."/>
            <person name="Huh W.-K."/>
            <person name="Bower K."/>
            <person name="Howson R.W."/>
            <person name="Belle A."/>
            <person name="Dephoure N."/>
            <person name="O'Shea E.K."/>
            <person name="Weissman J.S."/>
        </authorList>
    </citation>
    <scope>LEVEL OF PROTEIN EXPRESSION [LARGE SCALE ANALYSIS]</scope>
</reference>
<reference key="7">
    <citation type="journal article" date="2012" name="Proc. Natl. Acad. Sci. U.S.A.">
        <title>N-terminal acetylome analyses and functional insights of the N-terminal acetyltransferase NatB.</title>
        <authorList>
            <person name="Van Damme P."/>
            <person name="Lasa M."/>
            <person name="Polevoda B."/>
            <person name="Gazquez C."/>
            <person name="Elosegui-Artola A."/>
            <person name="Kim D.S."/>
            <person name="De Juan-Pardo E."/>
            <person name="Demeyer K."/>
            <person name="Hole K."/>
            <person name="Larrea E."/>
            <person name="Timmerman E."/>
            <person name="Prieto J."/>
            <person name="Arnesen T."/>
            <person name="Sherman F."/>
            <person name="Gevaert K."/>
            <person name="Aldabe R."/>
        </authorList>
    </citation>
    <scope>IDENTIFICATION BY MASS SPECTROMETRY [LARGE SCALE ANALYSIS]</scope>
</reference>
<reference key="8">
    <citation type="journal article" date="2012" name="Proteomics">
        <title>Sites of ubiquitin attachment in Saccharomyces cerevisiae.</title>
        <authorList>
            <person name="Starita L.M."/>
            <person name="Lo R.S."/>
            <person name="Eng J.K."/>
            <person name="von Haller P.D."/>
            <person name="Fields S."/>
        </authorList>
    </citation>
    <scope>UBIQUITINATION [LARGE SCALE ANALYSIS] AT LYS-29</scope>
    <scope>IDENTIFICATION BY MASS SPECTROMETRY [LARGE SCALE ANALYSIS]</scope>
</reference>
<protein>
    <recommendedName>
        <fullName>Actin-related protein 2/3 complex subunit 3</fullName>
    </recommendedName>
    <alternativeName>
        <fullName>Arp2/3 complex 21 kDa subunit</fullName>
        <shortName>p21-ARC</shortName>
    </alternativeName>
</protein>
<feature type="chain" id="PRO_0000124048" description="Actin-related protein 2/3 complex subunit 3">
    <location>
        <begin position="1"/>
        <end position="178"/>
    </location>
</feature>
<feature type="cross-link" description="Glycyl lysine isopeptide (Lys-Gly) (interchain with G-Cter in ubiquitin)" evidence="5">
    <location>
        <position position="29"/>
    </location>
</feature>
<gene>
    <name type="primary">ARC18</name>
    <name type="ordered locus">YLR370C</name>
    <name type="ORF">L8039.15</name>
</gene>
<accession>Q05933</accession>
<accession>D6VZ07</accession>